<organism>
    <name type="scientific">Burkholderia cenocepacia (strain HI2424)</name>
    <dbReference type="NCBI Taxonomy" id="331272"/>
    <lineage>
        <taxon>Bacteria</taxon>
        <taxon>Pseudomonadati</taxon>
        <taxon>Pseudomonadota</taxon>
        <taxon>Betaproteobacteria</taxon>
        <taxon>Burkholderiales</taxon>
        <taxon>Burkholderiaceae</taxon>
        <taxon>Burkholderia</taxon>
        <taxon>Burkholderia cepacia complex</taxon>
    </lineage>
</organism>
<reference key="1">
    <citation type="submission" date="2006-08" db="EMBL/GenBank/DDBJ databases">
        <title>Complete sequence of chromosome 1 of Burkholderia cenocepacia HI2424.</title>
        <authorList>
            <person name="Copeland A."/>
            <person name="Lucas S."/>
            <person name="Lapidus A."/>
            <person name="Barry K."/>
            <person name="Detter J.C."/>
            <person name="Glavina del Rio T."/>
            <person name="Hammon N."/>
            <person name="Israni S."/>
            <person name="Pitluck S."/>
            <person name="Chain P."/>
            <person name="Malfatti S."/>
            <person name="Shin M."/>
            <person name="Vergez L."/>
            <person name="Schmutz J."/>
            <person name="Larimer F."/>
            <person name="Land M."/>
            <person name="Hauser L."/>
            <person name="Kyrpides N."/>
            <person name="Kim E."/>
            <person name="LiPuma J.J."/>
            <person name="Gonzalez C.F."/>
            <person name="Konstantinidis K."/>
            <person name="Tiedje J.M."/>
            <person name="Richardson P."/>
        </authorList>
    </citation>
    <scope>NUCLEOTIDE SEQUENCE [LARGE SCALE GENOMIC DNA]</scope>
    <source>
        <strain>HI2424</strain>
    </source>
</reference>
<keyword id="KW-0687">Ribonucleoprotein</keyword>
<keyword id="KW-0689">Ribosomal protein</keyword>
<keyword id="KW-0694">RNA-binding</keyword>
<keyword id="KW-0699">rRNA-binding</keyword>
<accession>A0K3M9</accession>
<name>RS19_BURCH</name>
<feature type="chain" id="PRO_1000051020" description="Small ribosomal subunit protein uS19">
    <location>
        <begin position="1"/>
        <end position="91"/>
    </location>
</feature>
<gene>
    <name evidence="1" type="primary">rpsS</name>
    <name type="ordered locus">Bcen2424_0352</name>
</gene>
<proteinExistence type="inferred from homology"/>
<dbReference type="EMBL" id="CP000458">
    <property type="protein sequence ID" value="ABK07106.1"/>
    <property type="molecule type" value="Genomic_DNA"/>
</dbReference>
<dbReference type="RefSeq" id="WP_004199273.1">
    <property type="nucleotide sequence ID" value="NC_008542.1"/>
</dbReference>
<dbReference type="SMR" id="A0K3M9"/>
<dbReference type="GeneID" id="98107156"/>
<dbReference type="KEGG" id="bch:Bcen2424_0352"/>
<dbReference type="HOGENOM" id="CLU_144911_0_1_4"/>
<dbReference type="GO" id="GO:0005737">
    <property type="term" value="C:cytoplasm"/>
    <property type="evidence" value="ECO:0007669"/>
    <property type="project" value="UniProtKB-ARBA"/>
</dbReference>
<dbReference type="GO" id="GO:0015935">
    <property type="term" value="C:small ribosomal subunit"/>
    <property type="evidence" value="ECO:0007669"/>
    <property type="project" value="InterPro"/>
</dbReference>
<dbReference type="GO" id="GO:0019843">
    <property type="term" value="F:rRNA binding"/>
    <property type="evidence" value="ECO:0007669"/>
    <property type="project" value="UniProtKB-UniRule"/>
</dbReference>
<dbReference type="GO" id="GO:0003735">
    <property type="term" value="F:structural constituent of ribosome"/>
    <property type="evidence" value="ECO:0007669"/>
    <property type="project" value="InterPro"/>
</dbReference>
<dbReference type="GO" id="GO:0000028">
    <property type="term" value="P:ribosomal small subunit assembly"/>
    <property type="evidence" value="ECO:0007669"/>
    <property type="project" value="TreeGrafter"/>
</dbReference>
<dbReference type="GO" id="GO:0006412">
    <property type="term" value="P:translation"/>
    <property type="evidence" value="ECO:0007669"/>
    <property type="project" value="UniProtKB-UniRule"/>
</dbReference>
<dbReference type="FunFam" id="3.30.860.10:FF:000001">
    <property type="entry name" value="30S ribosomal protein S19"/>
    <property type="match status" value="1"/>
</dbReference>
<dbReference type="Gene3D" id="3.30.860.10">
    <property type="entry name" value="30s Ribosomal Protein S19, Chain A"/>
    <property type="match status" value="1"/>
</dbReference>
<dbReference type="HAMAP" id="MF_00531">
    <property type="entry name" value="Ribosomal_uS19"/>
    <property type="match status" value="1"/>
</dbReference>
<dbReference type="InterPro" id="IPR002222">
    <property type="entry name" value="Ribosomal_uS19"/>
</dbReference>
<dbReference type="InterPro" id="IPR005732">
    <property type="entry name" value="Ribosomal_uS19_bac-type"/>
</dbReference>
<dbReference type="InterPro" id="IPR020934">
    <property type="entry name" value="Ribosomal_uS19_CS"/>
</dbReference>
<dbReference type="InterPro" id="IPR023575">
    <property type="entry name" value="Ribosomal_uS19_SF"/>
</dbReference>
<dbReference type="NCBIfam" id="TIGR01050">
    <property type="entry name" value="rpsS_bact"/>
    <property type="match status" value="1"/>
</dbReference>
<dbReference type="PANTHER" id="PTHR11880">
    <property type="entry name" value="RIBOSOMAL PROTEIN S19P FAMILY MEMBER"/>
    <property type="match status" value="1"/>
</dbReference>
<dbReference type="PANTHER" id="PTHR11880:SF8">
    <property type="entry name" value="SMALL RIBOSOMAL SUBUNIT PROTEIN US19M"/>
    <property type="match status" value="1"/>
</dbReference>
<dbReference type="Pfam" id="PF00203">
    <property type="entry name" value="Ribosomal_S19"/>
    <property type="match status" value="1"/>
</dbReference>
<dbReference type="PIRSF" id="PIRSF002144">
    <property type="entry name" value="Ribosomal_S19"/>
    <property type="match status" value="1"/>
</dbReference>
<dbReference type="PRINTS" id="PR00975">
    <property type="entry name" value="RIBOSOMALS19"/>
</dbReference>
<dbReference type="SUPFAM" id="SSF54570">
    <property type="entry name" value="Ribosomal protein S19"/>
    <property type="match status" value="1"/>
</dbReference>
<dbReference type="PROSITE" id="PS00323">
    <property type="entry name" value="RIBOSOMAL_S19"/>
    <property type="match status" value="1"/>
</dbReference>
<evidence type="ECO:0000255" key="1">
    <source>
        <dbReference type="HAMAP-Rule" id="MF_00531"/>
    </source>
</evidence>
<evidence type="ECO:0000305" key="2"/>
<sequence>MARSVKKGPFCDAHLLKKVEAAAASRDKKPIKTWSRRSTILPDFIGLTIAVHNGRQHVPVYISENMVGHKLGEFALTRTFKGHAADKKAKK</sequence>
<protein>
    <recommendedName>
        <fullName evidence="1">Small ribosomal subunit protein uS19</fullName>
    </recommendedName>
    <alternativeName>
        <fullName evidence="2">30S ribosomal protein S19</fullName>
    </alternativeName>
</protein>
<comment type="function">
    <text evidence="1">Protein S19 forms a complex with S13 that binds strongly to the 16S ribosomal RNA.</text>
</comment>
<comment type="similarity">
    <text evidence="1">Belongs to the universal ribosomal protein uS19 family.</text>
</comment>